<comment type="similarity">
    <text evidence="1">Belongs to the UPF0735 family.</text>
</comment>
<dbReference type="EMBL" id="CP000141">
    <property type="protein sequence ID" value="ABB15858.1"/>
    <property type="molecule type" value="Genomic_DNA"/>
</dbReference>
<dbReference type="RefSeq" id="WP_011344805.1">
    <property type="nucleotide sequence ID" value="NC_007503.1"/>
</dbReference>
<dbReference type="FunCoup" id="Q3AAV2">
    <property type="interactions" value="93"/>
</dbReference>
<dbReference type="STRING" id="246194.CHY_1913"/>
<dbReference type="KEGG" id="chy:CHY_1913"/>
<dbReference type="eggNOG" id="COG4492">
    <property type="taxonomic scope" value="Bacteria"/>
</dbReference>
<dbReference type="HOGENOM" id="CLU_128147_0_0_9"/>
<dbReference type="InParanoid" id="Q3AAV2"/>
<dbReference type="OrthoDB" id="9788773at2"/>
<dbReference type="Proteomes" id="UP000002706">
    <property type="component" value="Chromosome"/>
</dbReference>
<dbReference type="CDD" id="cd04888">
    <property type="entry name" value="ACT_PheB-BS"/>
    <property type="match status" value="1"/>
</dbReference>
<dbReference type="Gene3D" id="3.30.70.260">
    <property type="match status" value="1"/>
</dbReference>
<dbReference type="HAMAP" id="MF_00707">
    <property type="entry name" value="UPF0735"/>
    <property type="match status" value="1"/>
</dbReference>
<dbReference type="InterPro" id="IPR045865">
    <property type="entry name" value="ACT-like_dom_sf"/>
</dbReference>
<dbReference type="InterPro" id="IPR002912">
    <property type="entry name" value="ACT_dom"/>
</dbReference>
<dbReference type="InterPro" id="IPR008310">
    <property type="entry name" value="UPF0735_ACT_dom-cont"/>
</dbReference>
<dbReference type="NCBIfam" id="NF003361">
    <property type="entry name" value="PRK04435.1"/>
    <property type="match status" value="1"/>
</dbReference>
<dbReference type="PIRSF" id="PIRSF025624">
    <property type="entry name" value="ACT_PheB"/>
    <property type="match status" value="1"/>
</dbReference>
<dbReference type="SUPFAM" id="SSF55021">
    <property type="entry name" value="ACT-like"/>
    <property type="match status" value="1"/>
</dbReference>
<dbReference type="PROSITE" id="PS51671">
    <property type="entry name" value="ACT"/>
    <property type="match status" value="1"/>
</dbReference>
<sequence>MKKTKFLLVAVDILPEAIRKTAEVKELLSKRPELTVNEAVEKVGISRSAFYKYKDGVFPFYHKASGKIITLALNLEHRAGVLSKVLNFIAQYQGNVLTINQNLPLGGIANVTISIETEEMKVSIEELLEALSQMDGVSKVELVGQS</sequence>
<organism>
    <name type="scientific">Carboxydothermus hydrogenoformans (strain ATCC BAA-161 / DSM 6008 / Z-2901)</name>
    <dbReference type="NCBI Taxonomy" id="246194"/>
    <lineage>
        <taxon>Bacteria</taxon>
        <taxon>Bacillati</taxon>
        <taxon>Bacillota</taxon>
        <taxon>Clostridia</taxon>
        <taxon>Thermoanaerobacterales</taxon>
        <taxon>Thermoanaerobacteraceae</taxon>
        <taxon>Carboxydothermus</taxon>
    </lineage>
</organism>
<protein>
    <recommendedName>
        <fullName evidence="1">UPF0735 ACT domain-containing protein CHY_1913</fullName>
    </recommendedName>
</protein>
<feature type="chain" id="PRO_0000225653" description="UPF0735 ACT domain-containing protein CHY_1913">
    <location>
        <begin position="1"/>
        <end position="146"/>
    </location>
</feature>
<feature type="domain" description="ACT" evidence="1">
    <location>
        <begin position="70"/>
        <end position="145"/>
    </location>
</feature>
<reference key="1">
    <citation type="journal article" date="2005" name="PLoS Genet.">
        <title>Life in hot carbon monoxide: the complete genome sequence of Carboxydothermus hydrogenoformans Z-2901.</title>
        <authorList>
            <person name="Wu M."/>
            <person name="Ren Q."/>
            <person name="Durkin A.S."/>
            <person name="Daugherty S.C."/>
            <person name="Brinkac L.M."/>
            <person name="Dodson R.J."/>
            <person name="Madupu R."/>
            <person name="Sullivan S.A."/>
            <person name="Kolonay J.F."/>
            <person name="Nelson W.C."/>
            <person name="Tallon L.J."/>
            <person name="Jones K.M."/>
            <person name="Ulrich L.E."/>
            <person name="Gonzalez J.M."/>
            <person name="Zhulin I.B."/>
            <person name="Robb F.T."/>
            <person name="Eisen J.A."/>
        </authorList>
    </citation>
    <scope>NUCLEOTIDE SEQUENCE [LARGE SCALE GENOMIC DNA]</scope>
    <source>
        <strain>ATCC BAA-161 / DSM 6008 / Z-2901</strain>
    </source>
</reference>
<gene>
    <name type="ordered locus">CHY_1913</name>
</gene>
<keyword id="KW-1185">Reference proteome</keyword>
<name>Y1913_CARHZ</name>
<accession>Q3AAV2</accession>
<proteinExistence type="inferred from homology"/>
<evidence type="ECO:0000255" key="1">
    <source>
        <dbReference type="HAMAP-Rule" id="MF_00707"/>
    </source>
</evidence>